<comment type="function">
    <text evidence="7 8">Catalyzes the initial reaction in O-linked oligosaccharide biosynthesis, the transfer of an N-acetyl-D-galactosamine residue to a serine or threonine residue on the protein receptor (PubMed:10464263, PubMed:31932717). May participate in synthesis of oncofetal fibronectin (PubMed:10464263). Has activity toward MUC1A, MUC2, EA2 and fibronectin peptides (PubMed:10464263). Glycosylates FGF23 (PubMed:31932717).</text>
</comment>
<comment type="catalytic activity">
    <reaction evidence="7">
        <text>L-seryl-[protein] + UDP-N-acetyl-alpha-D-galactosamine = a 3-O-[N-acetyl-alpha-D-galactosaminyl]-L-seryl-[protein] + UDP + H(+)</text>
        <dbReference type="Rhea" id="RHEA:23956"/>
        <dbReference type="Rhea" id="RHEA-COMP:9863"/>
        <dbReference type="Rhea" id="RHEA-COMP:12788"/>
        <dbReference type="ChEBI" id="CHEBI:15378"/>
        <dbReference type="ChEBI" id="CHEBI:29999"/>
        <dbReference type="ChEBI" id="CHEBI:53604"/>
        <dbReference type="ChEBI" id="CHEBI:58223"/>
        <dbReference type="ChEBI" id="CHEBI:67138"/>
        <dbReference type="EC" id="2.4.1.41"/>
    </reaction>
</comment>
<comment type="catalytic activity">
    <reaction evidence="7 8">
        <text>L-threonyl-[protein] + UDP-N-acetyl-alpha-D-galactosamine = a 3-O-[N-acetyl-alpha-D-galactosaminyl]-L-threonyl-[protein] + UDP + H(+)</text>
        <dbReference type="Rhea" id="RHEA:52424"/>
        <dbReference type="Rhea" id="RHEA-COMP:11060"/>
        <dbReference type="Rhea" id="RHEA-COMP:11689"/>
        <dbReference type="ChEBI" id="CHEBI:15378"/>
        <dbReference type="ChEBI" id="CHEBI:30013"/>
        <dbReference type="ChEBI" id="CHEBI:58223"/>
        <dbReference type="ChEBI" id="CHEBI:67138"/>
        <dbReference type="ChEBI" id="CHEBI:87075"/>
        <dbReference type="EC" id="2.4.1.41"/>
    </reaction>
</comment>
<comment type="cofactor">
    <cofactor evidence="3">
        <name>Mn(2+)</name>
        <dbReference type="ChEBI" id="CHEBI:29035"/>
    </cofactor>
</comment>
<comment type="biophysicochemical properties">
    <kinetics>
        <KM evidence="8">39 uM for FGF23 NAPIPRRHTRSAEDDS peptide</KM>
        <KM evidence="7">2.46 mM for fibronectin PFVTHPGYD peptide</KM>
        <Vmax evidence="7">3.64 nmol/min/ug enzyme for fibronectin PFVTHPGYD peptide</Vmax>
    </kinetics>
</comment>
<comment type="pathway">
    <text>Protein modification; protein glycosylation.</text>
</comment>
<comment type="interaction">
    <interactant intactId="EBI-3907241">
        <id>Q8NCL4</id>
    </interactant>
    <interactant intactId="EBI-10975473">
        <id>O60333-2</id>
        <label>KIF1B</label>
    </interactant>
    <organismsDiffer>false</organismsDiffer>
    <experiments>3</experiments>
</comment>
<comment type="interaction">
    <interactant intactId="EBI-3907241">
        <id>Q8NCL4</id>
    </interactant>
    <interactant intactId="EBI-988601">
        <id>O43933</id>
        <label>PEX1</label>
    </interactant>
    <organismsDiffer>false</organismsDiffer>
    <experiments>3</experiments>
</comment>
<comment type="interaction">
    <interactant intactId="EBI-3907241">
        <id>Q8NCL4</id>
    </interactant>
    <interactant intactId="EBI-4401316">
        <id>Q9NWS8</id>
        <label>RMND1</label>
    </interactant>
    <organismsDiffer>false</organismsDiffer>
    <experiments>4</experiments>
</comment>
<comment type="interaction">
    <interactant intactId="EBI-3907241">
        <id>Q8NCL4</id>
    </interactant>
    <interactant intactId="EBI-720609">
        <id>O76024</id>
        <label>WFS1</label>
    </interactant>
    <organismsDiffer>false</organismsDiffer>
    <experiments>3</experiments>
</comment>
<comment type="subcellular location">
    <subcellularLocation>
        <location evidence="3">Golgi apparatus membrane</location>
        <topology evidence="3">Single-pass type II membrane protein</topology>
    </subcellularLocation>
</comment>
<comment type="tissue specificity">
    <text evidence="7">Expressed in placenta and trachea. Weakly expressed in brain and pancreas. Expressed in fibroblast. Weakly or not expressed in lung, liver, muscle, kidney, spleen, thymus, prostate, testis, ovary, intestine, colon, leukocyte, stomach, thyroid, spinal cord, lymph node, trachea, adrenal gland and bone marrow.</text>
</comment>
<comment type="domain">
    <text evidence="2">There are two conserved domains in the glycosyltransferase region: the N-terminal domain (domain A, also called GT1 motif), which is probably involved in manganese coordination and substrate binding and the C-terminal domain (domain B, also called Gal/GalNAc-T motif), which is probably involved in catalytic reaction and UDP-Gal binding.</text>
</comment>
<comment type="domain">
    <text evidence="4">The ricin B-type lectin domain binds to GalNAc and contributes to the glycopeptide specificity.</text>
</comment>
<comment type="similarity">
    <text evidence="9">Belongs to the glycosyltransferase 2 family. GalNAc-T subfamily.</text>
</comment>
<comment type="sequence caution" evidence="9">
    <conflict type="erroneous initiation">
        <sequence resource="EMBL-CDS" id="BAB15297"/>
    </conflict>
    <text>Truncated N-terminus.</text>
</comment>
<comment type="online information" name="Functional Glycomics Gateway - GTase">
    <link uri="http://www.functionalglycomics.org/glycomics/molecule/jsp/glycoEnzyme/viewGlycoEnzyme.jsp?gbpId=gt_hum_488"/>
    <text>Polypeptide N-acetylgalactosaminyltransferase 6</text>
</comment>
<name>GALT6_HUMAN</name>
<accession>Q8NCL4</accession>
<accession>Q8IYH4</accession>
<accession>Q9H6G2</accession>
<accession>Q9UIV5</accession>
<evidence type="ECO:0000250" key="1">
    <source>
        <dbReference type="UniProtKB" id="H0ZAB5"/>
    </source>
</evidence>
<evidence type="ECO:0000250" key="2">
    <source>
        <dbReference type="UniProtKB" id="O08912"/>
    </source>
</evidence>
<evidence type="ECO:0000250" key="3">
    <source>
        <dbReference type="UniProtKB" id="Q14435"/>
    </source>
</evidence>
<evidence type="ECO:0000250" key="4">
    <source>
        <dbReference type="UniProtKB" id="Q8N4A0"/>
    </source>
</evidence>
<evidence type="ECO:0000255" key="5"/>
<evidence type="ECO:0000255" key="6">
    <source>
        <dbReference type="PROSITE-ProRule" id="PRU00174"/>
    </source>
</evidence>
<evidence type="ECO:0000269" key="7">
    <source>
    </source>
</evidence>
<evidence type="ECO:0000269" key="8">
    <source>
    </source>
</evidence>
<evidence type="ECO:0000305" key="9"/>
<sequence>MRLLRRRHMPLRLAMVGCAFVLFLFLLHRDVSSREEATEKPWLKSLVSRKDHVLDLMLEAMNNLRDSMPKLQIRAPEAQQTLFSINQSCLPGFYTPAELKPFWERPPQDPNAPGADGKAFQKSKWTPLETQEKEEGYKKHCFNAFASDRISLQRSLGPDTRPPECVDQKFRRCPPLATTSVIIVFHNEAWSTLLRTVYSVLHTTPAILLKEIILVDDASTEEHLKEKLEQYVKQLQVVRVVRQEERKGLITARLLGASVAQAEVLTFLDAHCECFHGWLEPLLARIAEDKTVVVSPDIVTIDLNTFEFAKPVQRGRVHSRGNFDWSLTFGWETLPPHEKQRRKDETYPIKSPTFAGGLFSISKSYFEHIGTYDNQMEIWGGENVEMSFRVWQCGGQLEIIPCSVVGHVFRTKSPHTFPKGTSVIARNQVRLAEVWMDSYKKIFYRRNLQAAKMAQEKSFGDISERLQLREQLHCHNFSWYLHNVYPEMFVPDLTPTFYGAIKNLGTNQCLDVGENNRGGKPLIMYSCHGLGGNQYFEYTTQRDLRHNIAKQLCLHVSKGALGLGSCHFTGKNSQVPKDEEWELAQDQLIRNSGSGTCLTSQDKKPAMAPCNPSDPHQLWLFV</sequence>
<reference key="1">
    <citation type="journal article" date="1999" name="J. Biol. Chem.">
        <title>Cloning and characterization of a close homologue of human UDP-N-acetyl--D-galactosamine:polypeptide N-acetylgalactosaminyltransferase-T3, designated GalNAc-T6. Evidence for genetic but not functional redundancy.</title>
        <authorList>
            <person name="Bennett E.P."/>
            <person name="Hassan H."/>
            <person name="Mandel U."/>
            <person name="Hollingsworth M.A."/>
            <person name="Akisawa N."/>
            <person name="Ikematsu Y."/>
            <person name="Merkx G."/>
            <person name="Geurts van Kessel A."/>
            <person name="Olofsson S."/>
            <person name="Clausen H."/>
        </authorList>
    </citation>
    <scope>NUCLEOTIDE SEQUENCE [MRNA]</scope>
    <scope>FUNCTION</scope>
    <scope>CATALYTIC ACTIVITY</scope>
    <scope>TISSUE SPECIFICITY</scope>
    <scope>BIOPHYSICOCHEMICAL PROPERTIES</scope>
    <source>
        <tissue>Gastric carcinoma</tissue>
    </source>
</reference>
<reference key="2">
    <citation type="journal article" date="2004" name="Nat. Genet.">
        <title>Complete sequencing and characterization of 21,243 full-length human cDNAs.</title>
        <authorList>
            <person name="Ota T."/>
            <person name="Suzuki Y."/>
            <person name="Nishikawa T."/>
            <person name="Otsuki T."/>
            <person name="Sugiyama T."/>
            <person name="Irie R."/>
            <person name="Wakamatsu A."/>
            <person name="Hayashi K."/>
            <person name="Sato H."/>
            <person name="Nagai K."/>
            <person name="Kimura K."/>
            <person name="Makita H."/>
            <person name="Sekine M."/>
            <person name="Obayashi M."/>
            <person name="Nishi T."/>
            <person name="Shibahara T."/>
            <person name="Tanaka T."/>
            <person name="Ishii S."/>
            <person name="Yamamoto J."/>
            <person name="Saito K."/>
            <person name="Kawai Y."/>
            <person name="Isono Y."/>
            <person name="Nakamura Y."/>
            <person name="Nagahari K."/>
            <person name="Murakami K."/>
            <person name="Yasuda T."/>
            <person name="Iwayanagi T."/>
            <person name="Wagatsuma M."/>
            <person name="Shiratori A."/>
            <person name="Sudo H."/>
            <person name="Hosoiri T."/>
            <person name="Kaku Y."/>
            <person name="Kodaira H."/>
            <person name="Kondo H."/>
            <person name="Sugawara M."/>
            <person name="Takahashi M."/>
            <person name="Kanda K."/>
            <person name="Yokoi T."/>
            <person name="Furuya T."/>
            <person name="Kikkawa E."/>
            <person name="Omura Y."/>
            <person name="Abe K."/>
            <person name="Kamihara K."/>
            <person name="Katsuta N."/>
            <person name="Sato K."/>
            <person name="Tanikawa M."/>
            <person name="Yamazaki M."/>
            <person name="Ninomiya K."/>
            <person name="Ishibashi T."/>
            <person name="Yamashita H."/>
            <person name="Murakawa K."/>
            <person name="Fujimori K."/>
            <person name="Tanai H."/>
            <person name="Kimata M."/>
            <person name="Watanabe M."/>
            <person name="Hiraoka S."/>
            <person name="Chiba Y."/>
            <person name="Ishida S."/>
            <person name="Ono Y."/>
            <person name="Takiguchi S."/>
            <person name="Watanabe S."/>
            <person name="Yosida M."/>
            <person name="Hotuta T."/>
            <person name="Kusano J."/>
            <person name="Kanehori K."/>
            <person name="Takahashi-Fujii A."/>
            <person name="Hara H."/>
            <person name="Tanase T.-O."/>
            <person name="Nomura Y."/>
            <person name="Togiya S."/>
            <person name="Komai F."/>
            <person name="Hara R."/>
            <person name="Takeuchi K."/>
            <person name="Arita M."/>
            <person name="Imose N."/>
            <person name="Musashino K."/>
            <person name="Yuuki H."/>
            <person name="Oshima A."/>
            <person name="Sasaki N."/>
            <person name="Aotsuka S."/>
            <person name="Yoshikawa Y."/>
            <person name="Matsunawa H."/>
            <person name="Ichihara T."/>
            <person name="Shiohata N."/>
            <person name="Sano S."/>
            <person name="Moriya S."/>
            <person name="Momiyama H."/>
            <person name="Satoh N."/>
            <person name="Takami S."/>
            <person name="Terashima Y."/>
            <person name="Suzuki O."/>
            <person name="Nakagawa S."/>
            <person name="Senoh A."/>
            <person name="Mizoguchi H."/>
            <person name="Goto Y."/>
            <person name="Shimizu F."/>
            <person name="Wakebe H."/>
            <person name="Hishigaki H."/>
            <person name="Watanabe T."/>
            <person name="Sugiyama A."/>
            <person name="Takemoto M."/>
            <person name="Kawakami B."/>
            <person name="Yamazaki M."/>
            <person name="Watanabe K."/>
            <person name="Kumagai A."/>
            <person name="Itakura S."/>
            <person name="Fukuzumi Y."/>
            <person name="Fujimori Y."/>
            <person name="Komiyama M."/>
            <person name="Tashiro H."/>
            <person name="Tanigami A."/>
            <person name="Fujiwara T."/>
            <person name="Ono T."/>
            <person name="Yamada K."/>
            <person name="Fujii Y."/>
            <person name="Ozaki K."/>
            <person name="Hirao M."/>
            <person name="Ohmori Y."/>
            <person name="Kawabata A."/>
            <person name="Hikiji T."/>
            <person name="Kobatake N."/>
            <person name="Inagaki H."/>
            <person name="Ikema Y."/>
            <person name="Okamoto S."/>
            <person name="Okitani R."/>
            <person name="Kawakami T."/>
            <person name="Noguchi S."/>
            <person name="Itoh T."/>
            <person name="Shigeta K."/>
            <person name="Senba T."/>
            <person name="Matsumura K."/>
            <person name="Nakajima Y."/>
            <person name="Mizuno T."/>
            <person name="Morinaga M."/>
            <person name="Sasaki M."/>
            <person name="Togashi T."/>
            <person name="Oyama M."/>
            <person name="Hata H."/>
            <person name="Watanabe M."/>
            <person name="Komatsu T."/>
            <person name="Mizushima-Sugano J."/>
            <person name="Satoh T."/>
            <person name="Shirai Y."/>
            <person name="Takahashi Y."/>
            <person name="Nakagawa K."/>
            <person name="Okumura K."/>
            <person name="Nagase T."/>
            <person name="Nomura N."/>
            <person name="Kikuchi H."/>
            <person name="Masuho Y."/>
            <person name="Yamashita R."/>
            <person name="Nakai K."/>
            <person name="Yada T."/>
            <person name="Nakamura Y."/>
            <person name="Ohara O."/>
            <person name="Isogai T."/>
            <person name="Sugano S."/>
        </authorList>
    </citation>
    <scope>NUCLEOTIDE SEQUENCE [LARGE SCALE MRNA]</scope>
    <source>
        <tissue>Kidney epithelium</tissue>
        <tissue>Mammary gland</tissue>
    </source>
</reference>
<reference key="3">
    <citation type="journal article" date="2004" name="Genome Res.">
        <title>The status, quality, and expansion of the NIH full-length cDNA project: the Mammalian Gene Collection (MGC).</title>
        <authorList>
            <consortium name="The MGC Project Team"/>
        </authorList>
    </citation>
    <scope>NUCLEOTIDE SEQUENCE [LARGE SCALE MRNA]</scope>
    <source>
        <tissue>Lymph</tissue>
    </source>
</reference>
<reference key="4">
    <citation type="journal article" date="2020" name="Nat. Chem. Biol.">
        <title>Molecular basis for fibroblast growth factor 23 O-glycosylation by GalNAc-T3.</title>
        <authorList>
            <person name="de Las Rivas M."/>
            <person name="Paul Daniel E.J."/>
            <person name="Narimatsu Y."/>
            <person name="Companon I."/>
            <person name="Kato K."/>
            <person name="Hermosilla P."/>
            <person name="Thureau A."/>
            <person name="Ceballos-Laita L."/>
            <person name="Coelho H."/>
            <person name="Bernado P."/>
            <person name="Marcelo F."/>
            <person name="Hansen L."/>
            <person name="Maeda R."/>
            <person name="Lostao A."/>
            <person name="Corzana F."/>
            <person name="Clausen H."/>
            <person name="Gerken T.A."/>
            <person name="Hurtado-Guerrero R."/>
        </authorList>
    </citation>
    <scope>FUNCTION</scope>
    <scope>CATALYTIC ACTIVITY</scope>
    <scope>BIOPHYSICOCHEMICAL PROPERTIES</scope>
</reference>
<protein>
    <recommendedName>
        <fullName>Polypeptide N-acetylgalactosaminyltransferase 6</fullName>
        <ecNumber evidence="7 8">2.4.1.41</ecNumber>
    </recommendedName>
    <alternativeName>
        <fullName>Polypeptide GalNAc transferase 6</fullName>
        <shortName>GalNAc-T6</shortName>
        <shortName>pp-GaNTase 6</shortName>
    </alternativeName>
    <alternativeName>
        <fullName>Protein-UDP acetylgalactosaminyltransferase 6</fullName>
    </alternativeName>
    <alternativeName>
        <fullName>UDP-GalNAc:polypeptide N-acetylgalactosaminyltransferase 6</fullName>
    </alternativeName>
</protein>
<gene>
    <name type="primary">GALNT6</name>
</gene>
<feature type="chain" id="PRO_0000059114" description="Polypeptide N-acetylgalactosaminyltransferase 6">
    <location>
        <begin position="1"/>
        <end position="622"/>
    </location>
</feature>
<feature type="topological domain" description="Cytoplasmic" evidence="5">
    <location>
        <begin position="1"/>
        <end position="8"/>
    </location>
</feature>
<feature type="transmembrane region" description="Helical; Signal-anchor for type II membrane protein" evidence="5">
    <location>
        <begin position="9"/>
        <end position="28"/>
    </location>
</feature>
<feature type="topological domain" description="Lumenal" evidence="5">
    <location>
        <begin position="29"/>
        <end position="622"/>
    </location>
</feature>
<feature type="domain" description="Ricin B-type lectin" evidence="6">
    <location>
        <begin position="506"/>
        <end position="622"/>
    </location>
</feature>
<feature type="region of interest" description="Catalytic subdomain A">
    <location>
        <begin position="176"/>
        <end position="285"/>
    </location>
</feature>
<feature type="region of interest" description="Catalytic subdomain B">
    <location>
        <begin position="348"/>
        <end position="410"/>
    </location>
</feature>
<feature type="binding site" evidence="1">
    <location>
        <position position="269"/>
    </location>
    <ligand>
        <name>Mn(2+)</name>
        <dbReference type="ChEBI" id="CHEBI:29035"/>
    </ligand>
</feature>
<feature type="binding site" evidence="1">
    <location>
        <position position="271"/>
    </location>
    <ligand>
        <name>Mn(2+)</name>
        <dbReference type="ChEBI" id="CHEBI:29035"/>
    </ligand>
</feature>
<feature type="binding site" evidence="1">
    <location>
        <position position="407"/>
    </location>
    <ligand>
        <name>Mn(2+)</name>
        <dbReference type="ChEBI" id="CHEBI:29035"/>
    </ligand>
</feature>
<feature type="binding site" evidence="1">
    <location>
        <position position="511"/>
    </location>
    <ligand>
        <name>UDP-N-acetyl-alpha-D-galactosamine</name>
        <dbReference type="ChEBI" id="CHEBI:67138"/>
    </ligand>
</feature>
<feature type="binding site" evidence="1">
    <location>
        <position position="514"/>
    </location>
    <ligand>
        <name>UDP-N-acetyl-alpha-D-galactosamine</name>
        <dbReference type="ChEBI" id="CHEBI:67138"/>
    </ligand>
</feature>
<feature type="binding site" evidence="1">
    <location>
        <position position="528"/>
    </location>
    <ligand>
        <name>UDP-N-acetyl-alpha-D-galactosamine</name>
        <dbReference type="ChEBI" id="CHEBI:67138"/>
    </ligand>
</feature>
<feature type="binding site" evidence="1">
    <location>
        <position position="533"/>
    </location>
    <ligand>
        <name>UDP-N-acetyl-alpha-D-galactosamine</name>
        <dbReference type="ChEBI" id="CHEBI:67138"/>
    </ligand>
</feature>
<feature type="glycosylation site" description="N-linked (GlcNAc...) asparagine" evidence="5">
    <location>
        <position position="86"/>
    </location>
</feature>
<feature type="glycosylation site" description="N-linked (GlcNAc...) asparagine" evidence="5">
    <location>
        <position position="476"/>
    </location>
</feature>
<feature type="disulfide bond" evidence="6">
    <location>
        <begin position="165"/>
        <end position="402"/>
    </location>
</feature>
<feature type="disulfide bond" evidence="6">
    <location>
        <begin position="393"/>
        <end position="474"/>
    </location>
</feature>
<feature type="disulfide bond" evidence="6">
    <location>
        <begin position="509"/>
        <end position="527"/>
    </location>
</feature>
<feature type="disulfide bond" evidence="6">
    <location>
        <begin position="553"/>
        <end position="566"/>
    </location>
</feature>
<feature type="disulfide bond" evidence="6">
    <location>
        <begin position="597"/>
        <end position="610"/>
    </location>
</feature>
<feature type="sequence variant" id="VAR_019580" description="In dbSNP:rs747300.">
    <original>V</original>
    <variation>I</variation>
    <location>
        <position position="423"/>
    </location>
</feature>
<feature type="sequence conflict" description="In Ref. 1; CAA69876." evidence="9" ref="1">
    <original>S</original>
    <variation>P</variation>
    <location>
        <position position="362"/>
    </location>
</feature>
<feature type="sequence conflict" description="In Ref. 2; BAC11118." evidence="9" ref="2">
    <original>A</original>
    <variation>T</variation>
    <location>
        <position position="454"/>
    </location>
</feature>
<feature type="sequence conflict" description="In Ref. 2; BAC11118." evidence="9" ref="2">
    <original>Q</original>
    <variation>R</variation>
    <location>
        <position position="551"/>
    </location>
</feature>
<organism>
    <name type="scientific">Homo sapiens</name>
    <name type="common">Human</name>
    <dbReference type="NCBI Taxonomy" id="9606"/>
    <lineage>
        <taxon>Eukaryota</taxon>
        <taxon>Metazoa</taxon>
        <taxon>Chordata</taxon>
        <taxon>Craniata</taxon>
        <taxon>Vertebrata</taxon>
        <taxon>Euteleostomi</taxon>
        <taxon>Mammalia</taxon>
        <taxon>Eutheria</taxon>
        <taxon>Euarchontoglires</taxon>
        <taxon>Primates</taxon>
        <taxon>Haplorrhini</taxon>
        <taxon>Catarrhini</taxon>
        <taxon>Hominidae</taxon>
        <taxon>Homo</taxon>
    </lineage>
</organism>
<dbReference type="EC" id="2.4.1.41" evidence="7 8"/>
<dbReference type="EMBL" id="Y08565">
    <property type="protein sequence ID" value="CAA69876.1"/>
    <property type="molecule type" value="mRNA"/>
</dbReference>
<dbReference type="EMBL" id="AK025961">
    <property type="protein sequence ID" value="BAB15297.1"/>
    <property type="status" value="ALT_INIT"/>
    <property type="molecule type" value="mRNA"/>
</dbReference>
<dbReference type="EMBL" id="AK074658">
    <property type="protein sequence ID" value="BAC11118.1"/>
    <property type="molecule type" value="mRNA"/>
</dbReference>
<dbReference type="EMBL" id="BC035822">
    <property type="protein sequence ID" value="AAH35822.2"/>
    <property type="molecule type" value="mRNA"/>
</dbReference>
<dbReference type="CCDS" id="CCDS8813.1"/>
<dbReference type="RefSeq" id="NP_009141.2">
    <property type="nucleotide sequence ID" value="NM_007210.4"/>
</dbReference>
<dbReference type="RefSeq" id="XP_005268664.1">
    <property type="nucleotide sequence ID" value="XM_005268607.2"/>
</dbReference>
<dbReference type="RefSeq" id="XP_006719277.1">
    <property type="nucleotide sequence ID" value="XM_006719214.3"/>
</dbReference>
<dbReference type="RefSeq" id="XP_011536121.1">
    <property type="nucleotide sequence ID" value="XM_011537819.2"/>
</dbReference>
<dbReference type="RefSeq" id="XP_011536124.1">
    <property type="nucleotide sequence ID" value="XM_011537822.3"/>
</dbReference>
<dbReference type="RefSeq" id="XP_016874233.1">
    <property type="nucleotide sequence ID" value="XM_017018744.1"/>
</dbReference>
<dbReference type="RefSeq" id="XP_016874234.1">
    <property type="nucleotide sequence ID" value="XM_017018745.3"/>
</dbReference>
<dbReference type="RefSeq" id="XP_024304579.1">
    <property type="nucleotide sequence ID" value="XM_024448811.2"/>
</dbReference>
<dbReference type="RefSeq" id="XP_024304581.1">
    <property type="nucleotide sequence ID" value="XM_024448813.2"/>
</dbReference>
<dbReference type="RefSeq" id="XP_024304582.1">
    <property type="nucleotide sequence ID" value="XM_024448814.2"/>
</dbReference>
<dbReference type="RefSeq" id="XP_024304583.1">
    <property type="nucleotide sequence ID" value="XM_024448815.2"/>
</dbReference>
<dbReference type="RefSeq" id="XP_024304584.1">
    <property type="nucleotide sequence ID" value="XM_024448816.2"/>
</dbReference>
<dbReference type="RefSeq" id="XP_024304585.1">
    <property type="nucleotide sequence ID" value="XM_024448817.2"/>
</dbReference>
<dbReference type="RefSeq" id="XP_047284130.1">
    <property type="nucleotide sequence ID" value="XM_047428174.1"/>
</dbReference>
<dbReference type="RefSeq" id="XP_047284131.1">
    <property type="nucleotide sequence ID" value="XM_047428175.1"/>
</dbReference>
<dbReference type="RefSeq" id="XP_047284132.1">
    <property type="nucleotide sequence ID" value="XM_047428176.1"/>
</dbReference>
<dbReference type="RefSeq" id="XP_047284133.1">
    <property type="nucleotide sequence ID" value="XM_047428177.1"/>
</dbReference>
<dbReference type="RefSeq" id="XP_047284134.1">
    <property type="nucleotide sequence ID" value="XM_047428178.1"/>
</dbReference>
<dbReference type="RefSeq" id="XP_047284135.1">
    <property type="nucleotide sequence ID" value="XM_047428179.1"/>
</dbReference>
<dbReference type="RefSeq" id="XP_047284136.1">
    <property type="nucleotide sequence ID" value="XM_047428180.1"/>
</dbReference>
<dbReference type="RefSeq" id="XP_047284137.1">
    <property type="nucleotide sequence ID" value="XM_047428181.1"/>
</dbReference>
<dbReference type="RefSeq" id="XP_047284138.1">
    <property type="nucleotide sequence ID" value="XM_047428182.1"/>
</dbReference>
<dbReference type="RefSeq" id="XP_047284139.1">
    <property type="nucleotide sequence ID" value="XM_047428183.1"/>
</dbReference>
<dbReference type="RefSeq" id="XP_054226878.1">
    <property type="nucleotide sequence ID" value="XM_054370903.1"/>
</dbReference>
<dbReference type="RefSeq" id="XP_054226879.1">
    <property type="nucleotide sequence ID" value="XM_054370904.1"/>
</dbReference>
<dbReference type="RefSeq" id="XP_054226880.1">
    <property type="nucleotide sequence ID" value="XM_054370905.1"/>
</dbReference>
<dbReference type="RefSeq" id="XP_054226881.1">
    <property type="nucleotide sequence ID" value="XM_054370906.1"/>
</dbReference>
<dbReference type="RefSeq" id="XP_054226882.1">
    <property type="nucleotide sequence ID" value="XM_054370907.1"/>
</dbReference>
<dbReference type="RefSeq" id="XP_054226883.1">
    <property type="nucleotide sequence ID" value="XM_054370908.1"/>
</dbReference>
<dbReference type="RefSeq" id="XP_054226884.1">
    <property type="nucleotide sequence ID" value="XM_054370909.1"/>
</dbReference>
<dbReference type="RefSeq" id="XP_054226885.1">
    <property type="nucleotide sequence ID" value="XM_054370910.1"/>
</dbReference>
<dbReference type="RefSeq" id="XP_054226886.1">
    <property type="nucleotide sequence ID" value="XM_054370911.1"/>
</dbReference>
<dbReference type="RefSeq" id="XP_054226887.1">
    <property type="nucleotide sequence ID" value="XM_054370912.1"/>
</dbReference>
<dbReference type="RefSeq" id="XP_054226888.1">
    <property type="nucleotide sequence ID" value="XM_054370913.1"/>
</dbReference>
<dbReference type="RefSeq" id="XP_054226889.1">
    <property type="nucleotide sequence ID" value="XM_054370914.1"/>
</dbReference>
<dbReference type="RefSeq" id="XP_054226890.1">
    <property type="nucleotide sequence ID" value="XM_054370915.1"/>
</dbReference>
<dbReference type="RefSeq" id="XP_054226891.1">
    <property type="nucleotide sequence ID" value="XM_054370916.1"/>
</dbReference>
<dbReference type="RefSeq" id="XP_054226892.1">
    <property type="nucleotide sequence ID" value="XM_054370917.1"/>
</dbReference>
<dbReference type="RefSeq" id="XP_054226893.1">
    <property type="nucleotide sequence ID" value="XM_054370918.1"/>
</dbReference>
<dbReference type="RefSeq" id="XP_054226894.1">
    <property type="nucleotide sequence ID" value="XM_054370919.1"/>
</dbReference>
<dbReference type="RefSeq" id="XP_054226895.1">
    <property type="nucleotide sequence ID" value="XM_054370920.1"/>
</dbReference>
<dbReference type="RefSeq" id="XP_054226896.1">
    <property type="nucleotide sequence ID" value="XM_054370921.1"/>
</dbReference>
<dbReference type="RefSeq" id="XP_054226897.1">
    <property type="nucleotide sequence ID" value="XM_054370922.1"/>
</dbReference>
<dbReference type="RefSeq" id="XP_054226898.1">
    <property type="nucleotide sequence ID" value="XM_054370923.1"/>
</dbReference>
<dbReference type="RefSeq" id="XP_054226899.1">
    <property type="nucleotide sequence ID" value="XM_054370924.1"/>
</dbReference>
<dbReference type="SMR" id="Q8NCL4"/>
<dbReference type="BioGRID" id="116393">
    <property type="interactions" value="59"/>
</dbReference>
<dbReference type="FunCoup" id="Q8NCL4">
    <property type="interactions" value="136"/>
</dbReference>
<dbReference type="IntAct" id="Q8NCL4">
    <property type="interactions" value="44"/>
</dbReference>
<dbReference type="MINT" id="Q8NCL4"/>
<dbReference type="STRING" id="9606.ENSP00000348668"/>
<dbReference type="BindingDB" id="Q8NCL4"/>
<dbReference type="ChEMBL" id="CHEMBL4523400"/>
<dbReference type="CAZy" id="CBM13">
    <property type="family name" value="Carbohydrate-Binding Module Family 13"/>
</dbReference>
<dbReference type="CAZy" id="GT27">
    <property type="family name" value="Glycosyltransferase Family 27"/>
</dbReference>
<dbReference type="GlyCosmos" id="Q8NCL4">
    <property type="glycosylation" value="2 sites, No reported glycans"/>
</dbReference>
<dbReference type="GlyGen" id="Q8NCL4">
    <property type="glycosylation" value="8 sites, 1 O-linked glycan (6 sites)"/>
</dbReference>
<dbReference type="iPTMnet" id="Q8NCL4"/>
<dbReference type="PhosphoSitePlus" id="Q8NCL4"/>
<dbReference type="BioMuta" id="GALNT6"/>
<dbReference type="DMDM" id="51316028"/>
<dbReference type="jPOST" id="Q8NCL4"/>
<dbReference type="MassIVE" id="Q8NCL4"/>
<dbReference type="PaxDb" id="9606-ENSP00000444171"/>
<dbReference type="PeptideAtlas" id="Q8NCL4"/>
<dbReference type="ProteomicsDB" id="72903"/>
<dbReference type="Pumba" id="Q8NCL4"/>
<dbReference type="Antibodypedia" id="14380">
    <property type="antibodies" value="198 antibodies from 22 providers"/>
</dbReference>
<dbReference type="DNASU" id="11226"/>
<dbReference type="Ensembl" id="ENST00000356317.8">
    <property type="protein sequence ID" value="ENSP00000348668.2"/>
    <property type="gene ID" value="ENSG00000139629.16"/>
</dbReference>
<dbReference type="Ensembl" id="ENST00000543196.6">
    <property type="protein sequence ID" value="ENSP00000444171.1"/>
    <property type="gene ID" value="ENSG00000139629.16"/>
</dbReference>
<dbReference type="GeneID" id="11226"/>
<dbReference type="KEGG" id="hsa:11226"/>
<dbReference type="MANE-Select" id="ENST00000356317.8">
    <property type="protein sequence ID" value="ENSP00000348668.2"/>
    <property type="RefSeq nucleotide sequence ID" value="NM_007210.4"/>
    <property type="RefSeq protein sequence ID" value="NP_009141.2"/>
</dbReference>
<dbReference type="UCSC" id="uc001ryk.3">
    <property type="organism name" value="human"/>
</dbReference>
<dbReference type="AGR" id="HGNC:4128"/>
<dbReference type="CTD" id="11226"/>
<dbReference type="DisGeNET" id="11226"/>
<dbReference type="GeneCards" id="GALNT6"/>
<dbReference type="HGNC" id="HGNC:4128">
    <property type="gene designation" value="GALNT6"/>
</dbReference>
<dbReference type="HPA" id="ENSG00000139629">
    <property type="expression patterns" value="Tissue enhanced (cervix, stomach)"/>
</dbReference>
<dbReference type="MIM" id="605148">
    <property type="type" value="gene"/>
</dbReference>
<dbReference type="neXtProt" id="NX_Q8NCL4"/>
<dbReference type="OpenTargets" id="ENSG00000139629"/>
<dbReference type="PharmGKB" id="PA28541"/>
<dbReference type="VEuPathDB" id="HostDB:ENSG00000139629"/>
<dbReference type="eggNOG" id="KOG3736">
    <property type="taxonomic scope" value="Eukaryota"/>
</dbReference>
<dbReference type="GeneTree" id="ENSGT00940000160845"/>
<dbReference type="HOGENOM" id="CLU_013477_0_3_1"/>
<dbReference type="InParanoid" id="Q8NCL4"/>
<dbReference type="OMA" id="SWFLHNI"/>
<dbReference type="OrthoDB" id="416652at2759"/>
<dbReference type="PAN-GO" id="Q8NCL4">
    <property type="GO annotations" value="3 GO annotations based on evolutionary models"/>
</dbReference>
<dbReference type="PhylomeDB" id="Q8NCL4"/>
<dbReference type="TreeFam" id="TF313267"/>
<dbReference type="BRENDA" id="2.4.1.41">
    <property type="organism ID" value="2681"/>
</dbReference>
<dbReference type="PathwayCommons" id="Q8NCL4"/>
<dbReference type="Reactome" id="R-HSA-913709">
    <property type="pathway name" value="O-linked glycosylation of mucins"/>
</dbReference>
<dbReference type="SignaLink" id="Q8NCL4"/>
<dbReference type="UniPathway" id="UPA00378"/>
<dbReference type="BioGRID-ORCS" id="11226">
    <property type="hits" value="26 hits in 1156 CRISPR screens"/>
</dbReference>
<dbReference type="ChiTaRS" id="GALNT6">
    <property type="organism name" value="human"/>
</dbReference>
<dbReference type="GeneWiki" id="GALNT6"/>
<dbReference type="GenomeRNAi" id="11226"/>
<dbReference type="Pharos" id="Q8NCL4">
    <property type="development level" value="Tbio"/>
</dbReference>
<dbReference type="PRO" id="PR:Q8NCL4"/>
<dbReference type="Proteomes" id="UP000005640">
    <property type="component" value="Chromosome 12"/>
</dbReference>
<dbReference type="RNAct" id="Q8NCL4">
    <property type="molecule type" value="protein"/>
</dbReference>
<dbReference type="Bgee" id="ENSG00000139629">
    <property type="expression patterns" value="Expressed in parotid gland and 158 other cell types or tissues"/>
</dbReference>
<dbReference type="ExpressionAtlas" id="Q8NCL4">
    <property type="expression patterns" value="baseline and differential"/>
</dbReference>
<dbReference type="GO" id="GO:0005794">
    <property type="term" value="C:Golgi apparatus"/>
    <property type="evidence" value="ECO:0000314"/>
    <property type="project" value="BHF-UCL"/>
</dbReference>
<dbReference type="GO" id="GO:0000139">
    <property type="term" value="C:Golgi membrane"/>
    <property type="evidence" value="ECO:0000304"/>
    <property type="project" value="Reactome"/>
</dbReference>
<dbReference type="GO" id="GO:0048471">
    <property type="term" value="C:perinuclear region of cytoplasm"/>
    <property type="evidence" value="ECO:0000314"/>
    <property type="project" value="BHF-UCL"/>
</dbReference>
<dbReference type="GO" id="GO:0030246">
    <property type="term" value="F:carbohydrate binding"/>
    <property type="evidence" value="ECO:0007669"/>
    <property type="project" value="UniProtKB-KW"/>
</dbReference>
<dbReference type="GO" id="GO:0046872">
    <property type="term" value="F:metal ion binding"/>
    <property type="evidence" value="ECO:0007669"/>
    <property type="project" value="UniProtKB-KW"/>
</dbReference>
<dbReference type="GO" id="GO:0004653">
    <property type="term" value="F:polypeptide N-acetylgalactosaminyltransferase activity"/>
    <property type="evidence" value="ECO:0000314"/>
    <property type="project" value="UniProtKB"/>
</dbReference>
<dbReference type="GO" id="GO:0016266">
    <property type="term" value="P:O-glycan processing"/>
    <property type="evidence" value="ECO:0000304"/>
    <property type="project" value="Reactome"/>
</dbReference>
<dbReference type="GO" id="GO:0006493">
    <property type="term" value="P:protein O-linked glycosylation"/>
    <property type="evidence" value="ECO:0000318"/>
    <property type="project" value="GO_Central"/>
</dbReference>
<dbReference type="GO" id="GO:0018243">
    <property type="term" value="P:protein O-linked glycosylation via threonine"/>
    <property type="evidence" value="ECO:0000314"/>
    <property type="project" value="UniProtKB"/>
</dbReference>
<dbReference type="CDD" id="cd23470">
    <property type="entry name" value="beta-trefoil_Ricin_GALNT6"/>
    <property type="match status" value="1"/>
</dbReference>
<dbReference type="CDD" id="cd02510">
    <property type="entry name" value="pp-GalNAc-T"/>
    <property type="match status" value="1"/>
</dbReference>
<dbReference type="FunFam" id="2.80.10.50:FF:000024">
    <property type="entry name" value="Polypeptide N-acetylgalactosaminyltransferase"/>
    <property type="match status" value="1"/>
</dbReference>
<dbReference type="FunFam" id="3.90.550.10:FF:000039">
    <property type="entry name" value="Polypeptide N-acetylgalactosaminyltransferase"/>
    <property type="match status" value="1"/>
</dbReference>
<dbReference type="Gene3D" id="2.80.10.50">
    <property type="match status" value="1"/>
</dbReference>
<dbReference type="Gene3D" id="3.90.550.10">
    <property type="entry name" value="Spore Coat Polysaccharide Biosynthesis Protein SpsA, Chain A"/>
    <property type="match status" value="1"/>
</dbReference>
<dbReference type="InterPro" id="IPR045885">
    <property type="entry name" value="GalNAc-T"/>
</dbReference>
<dbReference type="InterPro" id="IPR001173">
    <property type="entry name" value="Glyco_trans_2-like"/>
</dbReference>
<dbReference type="InterPro" id="IPR029044">
    <property type="entry name" value="Nucleotide-diphossugar_trans"/>
</dbReference>
<dbReference type="InterPro" id="IPR035992">
    <property type="entry name" value="Ricin_B-like_lectins"/>
</dbReference>
<dbReference type="InterPro" id="IPR000772">
    <property type="entry name" value="Ricin_B_lectin"/>
</dbReference>
<dbReference type="PANTHER" id="PTHR11675">
    <property type="entry name" value="N-ACETYLGALACTOSAMINYLTRANSFERASE"/>
    <property type="match status" value="1"/>
</dbReference>
<dbReference type="PANTHER" id="PTHR11675:SF58">
    <property type="entry name" value="POLYPEPTIDE N-ACETYLGALACTOSAMINYLTRANSFERASE 6"/>
    <property type="match status" value="1"/>
</dbReference>
<dbReference type="Pfam" id="PF00535">
    <property type="entry name" value="Glycos_transf_2"/>
    <property type="match status" value="1"/>
</dbReference>
<dbReference type="Pfam" id="PF00652">
    <property type="entry name" value="Ricin_B_lectin"/>
    <property type="match status" value="1"/>
</dbReference>
<dbReference type="SMART" id="SM00458">
    <property type="entry name" value="RICIN"/>
    <property type="match status" value="1"/>
</dbReference>
<dbReference type="SUPFAM" id="SSF53448">
    <property type="entry name" value="Nucleotide-diphospho-sugar transferases"/>
    <property type="match status" value="1"/>
</dbReference>
<dbReference type="SUPFAM" id="SSF50370">
    <property type="entry name" value="Ricin B-like lectins"/>
    <property type="match status" value="1"/>
</dbReference>
<dbReference type="PROSITE" id="PS50231">
    <property type="entry name" value="RICIN_B_LECTIN"/>
    <property type="match status" value="1"/>
</dbReference>
<proteinExistence type="evidence at protein level"/>
<keyword id="KW-1015">Disulfide bond</keyword>
<keyword id="KW-0325">Glycoprotein</keyword>
<keyword id="KW-0328">Glycosyltransferase</keyword>
<keyword id="KW-0333">Golgi apparatus</keyword>
<keyword id="KW-0430">Lectin</keyword>
<keyword id="KW-0464">Manganese</keyword>
<keyword id="KW-0472">Membrane</keyword>
<keyword id="KW-0479">Metal-binding</keyword>
<keyword id="KW-1267">Proteomics identification</keyword>
<keyword id="KW-1185">Reference proteome</keyword>
<keyword id="KW-0735">Signal-anchor</keyword>
<keyword id="KW-0808">Transferase</keyword>
<keyword id="KW-0812">Transmembrane</keyword>
<keyword id="KW-1133">Transmembrane helix</keyword>